<sequence>MAYASRFLSRSKQLQGGLVILQQQHAIPVRAFAKEAARPTFKGDEMLKGVFFDIKNKFQAAVDILRKEKITLDPEDPAAVKQYANVMKTIRQKADMFSESQRIKHDIDTETQDIPDARAYLLKLQEIRTRRGLTDELGAEAMMFEALEKVEKDIKKPLLRSDKKGMDLLVAEFEKGNKKLGIRKEDLPKYEENLELSMAKAQLDELKSDAVEAMESQKKKEEFQDEEMPDVKSLDIRNFI</sequence>
<evidence type="ECO:0000250" key="1"/>
<evidence type="ECO:0000256" key="2">
    <source>
        <dbReference type="SAM" id="MobiDB-lite"/>
    </source>
</evidence>
<evidence type="ECO:0000269" key="3">
    <source>
    </source>
</evidence>
<evidence type="ECO:0000305" key="4"/>
<evidence type="ECO:0000312" key="5">
    <source>
        <dbReference type="EMBL" id="AAD20405.1"/>
    </source>
</evidence>
<keyword id="KW-0025">Alternative splicing</keyword>
<keyword id="KW-0138">CF(0)</keyword>
<keyword id="KW-0903">Direct protein sequencing</keyword>
<keyword id="KW-0375">Hydrogen ion transport</keyword>
<keyword id="KW-0406">Ion transport</keyword>
<keyword id="KW-0472">Membrane</keyword>
<keyword id="KW-0496">Mitochondrion</keyword>
<keyword id="KW-0999">Mitochondrion inner membrane</keyword>
<keyword id="KW-1185">Reference proteome</keyword>
<keyword id="KW-0809">Transit peptide</keyword>
<keyword id="KW-0813">Transport</keyword>
<name>ATP7_ARATH</name>
<accession>Q9SJ12</accession>
<accession>Q8LBN3</accession>
<organism evidence="5">
    <name type="scientific">Arabidopsis thaliana</name>
    <name type="common">Mouse-ear cress</name>
    <dbReference type="NCBI Taxonomy" id="3702"/>
    <lineage>
        <taxon>Eukaryota</taxon>
        <taxon>Viridiplantae</taxon>
        <taxon>Streptophyta</taxon>
        <taxon>Embryophyta</taxon>
        <taxon>Tracheophyta</taxon>
        <taxon>Spermatophyta</taxon>
        <taxon>Magnoliopsida</taxon>
        <taxon>eudicotyledons</taxon>
        <taxon>Gunneridae</taxon>
        <taxon>Pentapetalae</taxon>
        <taxon>rosids</taxon>
        <taxon>malvids</taxon>
        <taxon>Brassicales</taxon>
        <taxon>Brassicaceae</taxon>
        <taxon>Camelineae</taxon>
        <taxon>Arabidopsis</taxon>
    </lineage>
</organism>
<feature type="transit peptide" description="Mitochondrion" evidence="3">
    <location>
        <begin position="1"/>
        <end position="32"/>
    </location>
</feature>
<feature type="chain" id="PRO_0000002533" description="Probable ATP synthase 24 kDa subunit, mitochondrial">
    <location>
        <begin position="33"/>
        <end position="240"/>
    </location>
</feature>
<feature type="region of interest" description="Disordered" evidence="2">
    <location>
        <begin position="210"/>
        <end position="240"/>
    </location>
</feature>
<feature type="compositionally biased region" description="Basic and acidic residues" evidence="2">
    <location>
        <begin position="210"/>
        <end position="222"/>
    </location>
</feature>
<feature type="compositionally biased region" description="Basic and acidic residues" evidence="2">
    <location>
        <begin position="229"/>
        <end position="240"/>
    </location>
</feature>
<feature type="sequence conflict" description="In Ref. 4; AAM64665." evidence="4" ref="4">
    <original>Q</original>
    <variation>K</variation>
    <location>
        <position position="15"/>
    </location>
</feature>
<reference evidence="5" key="1">
    <citation type="journal article" date="1999" name="Nature">
        <title>Sequence and analysis of chromosome 2 of the plant Arabidopsis thaliana.</title>
        <authorList>
            <person name="Lin X."/>
            <person name="Kaul S."/>
            <person name="Rounsley S.D."/>
            <person name="Shea T.P."/>
            <person name="Benito M.-I."/>
            <person name="Town C.D."/>
            <person name="Fujii C.Y."/>
            <person name="Mason T.M."/>
            <person name="Bowman C.L."/>
            <person name="Barnstead M.E."/>
            <person name="Feldblyum T.V."/>
            <person name="Buell C.R."/>
            <person name="Ketchum K.A."/>
            <person name="Lee J.J."/>
            <person name="Ronning C.M."/>
            <person name="Koo H.L."/>
            <person name="Moffat K.S."/>
            <person name="Cronin L.A."/>
            <person name="Shen M."/>
            <person name="Pai G."/>
            <person name="Van Aken S."/>
            <person name="Umayam L."/>
            <person name="Tallon L.J."/>
            <person name="Gill J.E."/>
            <person name="Adams M.D."/>
            <person name="Carrera A.J."/>
            <person name="Creasy T.H."/>
            <person name="Goodman H.M."/>
            <person name="Somerville C.R."/>
            <person name="Copenhaver G.P."/>
            <person name="Preuss D."/>
            <person name="Nierman W.C."/>
            <person name="White O."/>
            <person name="Eisen J.A."/>
            <person name="Salzberg S.L."/>
            <person name="Fraser C.M."/>
            <person name="Venter J.C."/>
        </authorList>
    </citation>
    <scope>NUCLEOTIDE SEQUENCE [LARGE SCALE GENOMIC DNA]</scope>
    <source>
        <strain>cv. Columbia</strain>
    </source>
</reference>
<reference evidence="4" key="2">
    <citation type="journal article" date="2017" name="Plant J.">
        <title>Araport11: a complete reannotation of the Arabidopsis thaliana reference genome.</title>
        <authorList>
            <person name="Cheng C.Y."/>
            <person name="Krishnakumar V."/>
            <person name="Chan A.P."/>
            <person name="Thibaud-Nissen F."/>
            <person name="Schobel S."/>
            <person name="Town C.D."/>
        </authorList>
    </citation>
    <scope>GENOME REANNOTATION</scope>
    <source>
        <strain>cv. Columbia</strain>
    </source>
</reference>
<reference key="3">
    <citation type="journal article" date="2003" name="Science">
        <title>Empirical analysis of transcriptional activity in the Arabidopsis genome.</title>
        <authorList>
            <person name="Yamada K."/>
            <person name="Lim J."/>
            <person name="Dale J.M."/>
            <person name="Chen H."/>
            <person name="Shinn P."/>
            <person name="Palm C.J."/>
            <person name="Southwick A.M."/>
            <person name="Wu H.C."/>
            <person name="Kim C.J."/>
            <person name="Nguyen M."/>
            <person name="Pham P.K."/>
            <person name="Cheuk R.F."/>
            <person name="Karlin-Newmann G."/>
            <person name="Liu S.X."/>
            <person name="Lam B."/>
            <person name="Sakano H."/>
            <person name="Wu T."/>
            <person name="Yu G."/>
            <person name="Miranda M."/>
            <person name="Quach H.L."/>
            <person name="Tripp M."/>
            <person name="Chang C.H."/>
            <person name="Lee J.M."/>
            <person name="Toriumi M.J."/>
            <person name="Chan M.M."/>
            <person name="Tang C.C."/>
            <person name="Onodera C.S."/>
            <person name="Deng J.M."/>
            <person name="Akiyama K."/>
            <person name="Ansari Y."/>
            <person name="Arakawa T."/>
            <person name="Banh J."/>
            <person name="Banno F."/>
            <person name="Bowser L."/>
            <person name="Brooks S.Y."/>
            <person name="Carninci P."/>
            <person name="Chao Q."/>
            <person name="Choy N."/>
            <person name="Enju A."/>
            <person name="Goldsmith A.D."/>
            <person name="Gurjal M."/>
            <person name="Hansen N.F."/>
            <person name="Hayashizaki Y."/>
            <person name="Johnson-Hopson C."/>
            <person name="Hsuan V.W."/>
            <person name="Iida K."/>
            <person name="Karnes M."/>
            <person name="Khan S."/>
            <person name="Koesema E."/>
            <person name="Ishida J."/>
            <person name="Jiang P.X."/>
            <person name="Jones T."/>
            <person name="Kawai J."/>
            <person name="Kamiya A."/>
            <person name="Meyers C."/>
            <person name="Nakajima M."/>
            <person name="Narusaka M."/>
            <person name="Seki M."/>
            <person name="Sakurai T."/>
            <person name="Satou M."/>
            <person name="Tamse R."/>
            <person name="Vaysberg M."/>
            <person name="Wallender E.K."/>
            <person name="Wong C."/>
            <person name="Yamamura Y."/>
            <person name="Yuan S."/>
            <person name="Shinozaki K."/>
            <person name="Davis R.W."/>
            <person name="Theologis A."/>
            <person name="Ecker J.R."/>
        </authorList>
    </citation>
    <scope>NUCLEOTIDE SEQUENCE [LARGE SCALE MRNA]</scope>
    <source>
        <strain>cv. Columbia</strain>
    </source>
</reference>
<reference evidence="4" key="4">
    <citation type="submission" date="2002-03" db="EMBL/GenBank/DDBJ databases">
        <title>Full-length cDNA from Arabidopsis thaliana.</title>
        <authorList>
            <person name="Brover V.V."/>
            <person name="Troukhan M.E."/>
            <person name="Alexandrov N.A."/>
            <person name="Lu Y.-P."/>
            <person name="Flavell R.B."/>
            <person name="Feldmann K.A."/>
        </authorList>
    </citation>
    <scope>NUCLEOTIDE SEQUENCE [LARGE SCALE MRNA]</scope>
</reference>
<reference evidence="4" key="5">
    <citation type="journal article" date="2001" name="Plant Physiol.">
        <title>Proteomic approach to identify novel mitochondrial proteins in Arabidopsis.</title>
        <authorList>
            <person name="Kruft V."/>
            <person name="Eubel H."/>
            <person name="Jaensch L."/>
            <person name="Werhahn W."/>
            <person name="Braun H.-P."/>
        </authorList>
    </citation>
    <scope>PROTEIN SEQUENCE OF 33-47</scope>
    <scope>SUBCELLULAR LOCATION</scope>
    <source>
        <tissue>Leaf</tissue>
        <tissue>Stem</tissue>
    </source>
</reference>
<reference key="6">
    <citation type="journal article" date="2004" name="Plant Cell">
        <title>Experimental analysis of the Arabidopsis mitochondrial proteome highlights signaling and regulatory components, provides assessment of targeting prediction programs, and indicates plant-specific mitochondrial proteins.</title>
        <authorList>
            <person name="Heazlewood J.L."/>
            <person name="Tonti-Filippini J.S."/>
            <person name="Gout A.M."/>
            <person name="Day D.A."/>
            <person name="Whelan J."/>
            <person name="Millar A.H."/>
        </authorList>
    </citation>
    <scope>IDENTIFICATION BY MASS SPECTROMETRY</scope>
    <scope>SUBCELLULAR LOCATION [LARGE SCALE ANALYSIS]</scope>
    <source>
        <strain>cv. Landsberg erecta</strain>
    </source>
</reference>
<dbReference type="EMBL" id="AC007019">
    <property type="protein sequence ID" value="AAD20405.1"/>
    <property type="molecule type" value="Genomic_DNA"/>
</dbReference>
<dbReference type="EMBL" id="CP002685">
    <property type="protein sequence ID" value="AEC07232.1"/>
    <property type="molecule type" value="Genomic_DNA"/>
</dbReference>
<dbReference type="EMBL" id="AY046020">
    <property type="protein sequence ID" value="AAK76694.1"/>
    <property type="molecule type" value="mRNA"/>
</dbReference>
<dbReference type="EMBL" id="AY079312">
    <property type="protein sequence ID" value="AAL85043.1"/>
    <property type="molecule type" value="mRNA"/>
</dbReference>
<dbReference type="EMBL" id="AY087107">
    <property type="protein sequence ID" value="AAM64665.1"/>
    <property type="molecule type" value="mRNA"/>
</dbReference>
<dbReference type="PIR" id="B84606">
    <property type="entry name" value="B84606"/>
</dbReference>
<dbReference type="RefSeq" id="NP_179778.1">
    <molecule id="Q9SJ12-1"/>
    <property type="nucleotide sequence ID" value="NM_127756.4"/>
</dbReference>
<dbReference type="SMR" id="Q9SJ12"/>
<dbReference type="BioGRID" id="2076">
    <property type="interactions" value="9"/>
</dbReference>
<dbReference type="FunCoup" id="Q9SJ12">
    <property type="interactions" value="2363"/>
</dbReference>
<dbReference type="IntAct" id="Q9SJ12">
    <property type="interactions" value="1"/>
</dbReference>
<dbReference type="MINT" id="Q9SJ12"/>
<dbReference type="STRING" id="3702.Q9SJ12"/>
<dbReference type="MetOSite" id="Q9SJ12"/>
<dbReference type="PaxDb" id="3702-AT2G21870.1"/>
<dbReference type="ProteomicsDB" id="241041">
    <molecule id="Q9SJ12-1"/>
</dbReference>
<dbReference type="EnsemblPlants" id="AT2G21870.1">
    <molecule id="Q9SJ12-1"/>
    <property type="protein sequence ID" value="AT2G21870.1"/>
    <property type="gene ID" value="AT2G21870"/>
</dbReference>
<dbReference type="GeneID" id="816723"/>
<dbReference type="Gramene" id="AT2G21870.1">
    <molecule id="Q9SJ12-1"/>
    <property type="protein sequence ID" value="AT2G21870.1"/>
    <property type="gene ID" value="AT2G21870"/>
</dbReference>
<dbReference type="KEGG" id="ath:AT2G21870"/>
<dbReference type="Araport" id="AT2G21870"/>
<dbReference type="TAIR" id="AT2G21870">
    <property type="gene designation" value="MGP1"/>
</dbReference>
<dbReference type="eggNOG" id="ENOG502QRUU">
    <property type="taxonomic scope" value="Eukaryota"/>
</dbReference>
<dbReference type="HOGENOM" id="CLU_101182_0_0_1"/>
<dbReference type="InParanoid" id="Q9SJ12"/>
<dbReference type="OMA" id="YFAKEAN"/>
<dbReference type="OrthoDB" id="508070at2759"/>
<dbReference type="PhylomeDB" id="Q9SJ12"/>
<dbReference type="CD-CODE" id="4299E36E">
    <property type="entry name" value="Nucleolus"/>
</dbReference>
<dbReference type="PRO" id="PR:Q9SJ12"/>
<dbReference type="Proteomes" id="UP000006548">
    <property type="component" value="Chromosome 2"/>
</dbReference>
<dbReference type="ExpressionAtlas" id="Q9SJ12">
    <property type="expression patterns" value="baseline and differential"/>
</dbReference>
<dbReference type="GO" id="GO:0009507">
    <property type="term" value="C:chloroplast"/>
    <property type="evidence" value="ECO:0007005"/>
    <property type="project" value="TAIR"/>
</dbReference>
<dbReference type="GO" id="GO:0005743">
    <property type="term" value="C:mitochondrial inner membrane"/>
    <property type="evidence" value="ECO:0007669"/>
    <property type="project" value="UniProtKB-SubCell"/>
</dbReference>
<dbReference type="GO" id="GO:0005739">
    <property type="term" value="C:mitochondrion"/>
    <property type="evidence" value="ECO:0000314"/>
    <property type="project" value="TAIR"/>
</dbReference>
<dbReference type="GO" id="GO:0005730">
    <property type="term" value="C:nucleolus"/>
    <property type="evidence" value="ECO:0007005"/>
    <property type="project" value="TAIR"/>
</dbReference>
<dbReference type="GO" id="GO:0045259">
    <property type="term" value="C:proton-transporting ATP synthase complex"/>
    <property type="evidence" value="ECO:0007669"/>
    <property type="project" value="UniProtKB-KW"/>
</dbReference>
<dbReference type="GO" id="GO:0005773">
    <property type="term" value="C:vacuole"/>
    <property type="evidence" value="ECO:0007005"/>
    <property type="project" value="TAIR"/>
</dbReference>
<dbReference type="GO" id="GO:0050897">
    <property type="term" value="F:cobalt ion binding"/>
    <property type="evidence" value="ECO:0007005"/>
    <property type="project" value="TAIR"/>
</dbReference>
<dbReference type="GO" id="GO:0005507">
    <property type="term" value="F:copper ion binding"/>
    <property type="evidence" value="ECO:0007005"/>
    <property type="project" value="TAIR"/>
</dbReference>
<dbReference type="GO" id="GO:0008270">
    <property type="term" value="F:zinc ion binding"/>
    <property type="evidence" value="ECO:0007005"/>
    <property type="project" value="TAIR"/>
</dbReference>
<dbReference type="GO" id="GO:0009555">
    <property type="term" value="P:pollen development"/>
    <property type="evidence" value="ECO:0000315"/>
    <property type="project" value="TAIR"/>
</dbReference>
<dbReference type="GO" id="GO:1902600">
    <property type="term" value="P:proton transmembrane transport"/>
    <property type="evidence" value="ECO:0007669"/>
    <property type="project" value="UniProtKB-KW"/>
</dbReference>
<dbReference type="InterPro" id="IPR031432">
    <property type="entry name" value="MGP1"/>
</dbReference>
<dbReference type="PANTHER" id="PTHR36013">
    <property type="entry name" value="ATP SYNTHASE 24 KDA SUBUNIT, MITOCHONDRIAL-RELATED"/>
    <property type="match status" value="1"/>
</dbReference>
<dbReference type="PANTHER" id="PTHR36013:SF2">
    <property type="entry name" value="ATP SYNTHASE 24 KDA SUBUNIT, MITOCHONDRIAL-RELATED"/>
    <property type="match status" value="1"/>
</dbReference>
<dbReference type="Pfam" id="PF15704">
    <property type="entry name" value="Mt_ATP_synt"/>
    <property type="match status" value="1"/>
</dbReference>
<protein>
    <recommendedName>
        <fullName>Probable ATP synthase 24 kDa subunit, mitochondrial</fullName>
    </recommendedName>
</protein>
<gene>
    <name type="ordered locus">At2g21870</name>
    <name type="ORF">F7D8.19</name>
</gene>
<comment type="function">
    <text evidence="1">Mitochondrial membrane ATP synthase (F(1)F(0) ATP synthase or Complex V) produces ATP from ADP in the presence of a proton gradient across the membrane which is generated by electron transport complexes of the respiratory chain. F-type ATPases consist of two structural domains, F(1) - containing the extramembraneous catalytic core and F(0) - containing the membrane proton channel, linked together by a central stalk and a peripheral stalk. During catalysis, ATP synthesis in the catalytic domain of F(1) is coupled via a rotary mechanism of the central stalk subunits to proton translocation. Part of the complex F(0) domain (By similarity).</text>
</comment>
<comment type="subcellular location">
    <subcellularLocation>
        <location>Mitochondrion</location>
    </subcellularLocation>
    <subcellularLocation>
        <location>Mitochondrion inner membrane</location>
    </subcellularLocation>
</comment>
<comment type="alternative products">
    <event type="alternative splicing"/>
    <isoform>
        <id>Q9SJ12-1</id>
        <name>1</name>
        <sequence type="displayed"/>
    </isoform>
    <text>A number of isoforms are produced. According to EST sequences.</text>
</comment>
<proteinExistence type="evidence at protein level"/>